<organism>
    <name type="scientific">Xylella fastidiosa (strain 9a5c)</name>
    <dbReference type="NCBI Taxonomy" id="160492"/>
    <lineage>
        <taxon>Bacteria</taxon>
        <taxon>Pseudomonadati</taxon>
        <taxon>Pseudomonadota</taxon>
        <taxon>Gammaproteobacteria</taxon>
        <taxon>Lysobacterales</taxon>
        <taxon>Lysobacteraceae</taxon>
        <taxon>Xylella</taxon>
    </lineage>
</organism>
<protein>
    <recommendedName>
        <fullName evidence="1">N-acetylornithine carbamoyltransferase</fullName>
        <ecNumber evidence="1">2.1.3.9</ecNumber>
    </recommendedName>
    <alternativeName>
        <fullName evidence="2">N-acetyl-L-ornithine transcarbamylase</fullName>
        <shortName evidence="2">AOTCase</shortName>
        <shortName evidence="2">Acetylornithine transcarbamylase</shortName>
    </alternativeName>
</protein>
<proteinExistence type="inferred from homology"/>
<evidence type="ECO:0000250" key="1">
    <source>
        <dbReference type="UniProtKB" id="Q8P8J2"/>
    </source>
</evidence>
<evidence type="ECO:0000255" key="2">
    <source>
        <dbReference type="HAMAP-Rule" id="MF_02234"/>
    </source>
</evidence>
<evidence type="ECO:0000305" key="3"/>
<name>AOTC_XYLFA</name>
<accession>Q9PEN0</accession>
<keyword id="KW-0028">Amino-acid biosynthesis</keyword>
<keyword id="KW-0055">Arginine biosynthesis</keyword>
<keyword id="KW-0963">Cytoplasm</keyword>
<keyword id="KW-0808">Transferase</keyword>
<dbReference type="EC" id="2.1.3.9" evidence="1"/>
<dbReference type="EMBL" id="AE003849">
    <property type="protein sequence ID" value="AAF83808.1"/>
    <property type="molecule type" value="Genomic_DNA"/>
</dbReference>
<dbReference type="PIR" id="F82737">
    <property type="entry name" value="F82737"/>
</dbReference>
<dbReference type="RefSeq" id="WP_010893517.1">
    <property type="nucleotide sequence ID" value="NC_002488.3"/>
</dbReference>
<dbReference type="SMR" id="Q9PEN0"/>
<dbReference type="STRING" id="160492.XF_0998"/>
<dbReference type="KEGG" id="xfa:XF_0998"/>
<dbReference type="eggNOG" id="COG0078">
    <property type="taxonomic scope" value="Bacteria"/>
</dbReference>
<dbReference type="HOGENOM" id="CLU_043846_3_3_6"/>
<dbReference type="UniPathway" id="UPA00068"/>
<dbReference type="Proteomes" id="UP000000812">
    <property type="component" value="Chromosome"/>
</dbReference>
<dbReference type="GO" id="GO:0005737">
    <property type="term" value="C:cytoplasm"/>
    <property type="evidence" value="ECO:0007669"/>
    <property type="project" value="UniProtKB-SubCell"/>
</dbReference>
<dbReference type="GO" id="GO:0016597">
    <property type="term" value="F:amino acid binding"/>
    <property type="evidence" value="ECO:0007669"/>
    <property type="project" value="InterPro"/>
</dbReference>
<dbReference type="GO" id="GO:0043857">
    <property type="term" value="F:N-acetylornithine carbamoyltransferase activity"/>
    <property type="evidence" value="ECO:0007669"/>
    <property type="project" value="UniProtKB-UniRule"/>
</dbReference>
<dbReference type="GO" id="GO:0004585">
    <property type="term" value="F:ornithine carbamoyltransferase activity"/>
    <property type="evidence" value="ECO:0007669"/>
    <property type="project" value="TreeGrafter"/>
</dbReference>
<dbReference type="GO" id="GO:0042450">
    <property type="term" value="P:arginine biosynthetic process via ornithine"/>
    <property type="evidence" value="ECO:0007669"/>
    <property type="project" value="InterPro"/>
</dbReference>
<dbReference type="GO" id="GO:0019240">
    <property type="term" value="P:citrulline biosynthetic process"/>
    <property type="evidence" value="ECO:0007669"/>
    <property type="project" value="TreeGrafter"/>
</dbReference>
<dbReference type="GO" id="GO:0006526">
    <property type="term" value="P:L-arginine biosynthetic process"/>
    <property type="evidence" value="ECO:0007669"/>
    <property type="project" value="UniProtKB-UniRule"/>
</dbReference>
<dbReference type="Gene3D" id="3.40.50.1370">
    <property type="entry name" value="Aspartate/ornithine carbamoyltransferase"/>
    <property type="match status" value="2"/>
</dbReference>
<dbReference type="HAMAP" id="MF_02234">
    <property type="entry name" value="AOTCase"/>
    <property type="match status" value="1"/>
</dbReference>
<dbReference type="InterPro" id="IPR043695">
    <property type="entry name" value="ArgF"/>
</dbReference>
<dbReference type="InterPro" id="IPR006132">
    <property type="entry name" value="Asp/Orn_carbamoyltranf_P-bd"/>
</dbReference>
<dbReference type="InterPro" id="IPR006130">
    <property type="entry name" value="Asp/Orn_carbamoylTrfase"/>
</dbReference>
<dbReference type="InterPro" id="IPR036901">
    <property type="entry name" value="Asp/Orn_carbamoylTrfase_sf"/>
</dbReference>
<dbReference type="InterPro" id="IPR006131">
    <property type="entry name" value="Asp_carbamoyltransf_Asp/Orn-bd"/>
</dbReference>
<dbReference type="NCBIfam" id="NF003384">
    <property type="entry name" value="PRK04523.1"/>
    <property type="match status" value="1"/>
</dbReference>
<dbReference type="PANTHER" id="PTHR45753">
    <property type="entry name" value="ORNITHINE CARBAMOYLTRANSFERASE, MITOCHONDRIAL"/>
    <property type="match status" value="1"/>
</dbReference>
<dbReference type="PANTHER" id="PTHR45753:SF3">
    <property type="entry name" value="ORNITHINE TRANSCARBAMYLASE, MITOCHONDRIAL"/>
    <property type="match status" value="1"/>
</dbReference>
<dbReference type="Pfam" id="PF00185">
    <property type="entry name" value="OTCace"/>
    <property type="match status" value="1"/>
</dbReference>
<dbReference type="Pfam" id="PF02729">
    <property type="entry name" value="OTCace_N"/>
    <property type="match status" value="1"/>
</dbReference>
<dbReference type="PRINTS" id="PR00100">
    <property type="entry name" value="AOTCASE"/>
</dbReference>
<dbReference type="PRINTS" id="PR00101">
    <property type="entry name" value="ATCASE"/>
</dbReference>
<dbReference type="SUPFAM" id="SSF53671">
    <property type="entry name" value="Aspartate/ornithine carbamoyltransferase"/>
    <property type="match status" value="1"/>
</dbReference>
<gene>
    <name evidence="2" type="primary">argF'</name>
    <name type="ordered locus">XF_0998</name>
</gene>
<sequence length="336" mass="37623">MALKHFLNTQDWSCSELNALLTQARAFKHNKLGNGLKGKSIALVFFNASMRTRSSFELGAFQLGGHAIVLQPGKDAWPIEFDTGTVMEAETEEHICEVARVLGHYVDLIGVRAFPKFLDWTYDRQDIVLNGFAKYSPVPVINMETITHPCQELAHIMALQEHFGTTDLRGKKYVLTWTYHPKPLNTAVANSALTIATRLGMDVTLLCPTPDYVLDERYIDWAQQNIADTGSTFQVSHDIDNAYRGADVIYAKSWGALPFFGNWAMEKPIRDQYRHFIVDEAKMALTNNAVFSHCLPLRRNVKATDAVMDGPNCIAIHEAGNRLHVQKAIMAALASQ</sequence>
<reference key="1">
    <citation type="journal article" date="2000" name="Nature">
        <title>The genome sequence of the plant pathogen Xylella fastidiosa.</title>
        <authorList>
            <person name="Simpson A.J.G."/>
            <person name="Reinach F.C."/>
            <person name="Arruda P."/>
            <person name="Abreu F.A."/>
            <person name="Acencio M."/>
            <person name="Alvarenga R."/>
            <person name="Alves L.M.C."/>
            <person name="Araya J.E."/>
            <person name="Baia G.S."/>
            <person name="Baptista C.S."/>
            <person name="Barros M.H."/>
            <person name="Bonaccorsi E.D."/>
            <person name="Bordin S."/>
            <person name="Bove J.M."/>
            <person name="Briones M.R.S."/>
            <person name="Bueno M.R.P."/>
            <person name="Camargo A.A."/>
            <person name="Camargo L.E.A."/>
            <person name="Carraro D.M."/>
            <person name="Carrer H."/>
            <person name="Colauto N.B."/>
            <person name="Colombo C."/>
            <person name="Costa F.F."/>
            <person name="Costa M.C.R."/>
            <person name="Costa-Neto C.M."/>
            <person name="Coutinho L.L."/>
            <person name="Cristofani M."/>
            <person name="Dias-Neto E."/>
            <person name="Docena C."/>
            <person name="El-Dorry H."/>
            <person name="Facincani A.P."/>
            <person name="Ferreira A.J.S."/>
            <person name="Ferreira V.C.A."/>
            <person name="Ferro J.A."/>
            <person name="Fraga J.S."/>
            <person name="Franca S.C."/>
            <person name="Franco M.C."/>
            <person name="Frohme M."/>
            <person name="Furlan L.R."/>
            <person name="Garnier M."/>
            <person name="Goldman G.H."/>
            <person name="Goldman M.H.S."/>
            <person name="Gomes S.L."/>
            <person name="Gruber A."/>
            <person name="Ho P.L."/>
            <person name="Hoheisel J.D."/>
            <person name="Junqueira M.L."/>
            <person name="Kemper E.L."/>
            <person name="Kitajima J.P."/>
            <person name="Krieger J.E."/>
            <person name="Kuramae E.E."/>
            <person name="Laigret F."/>
            <person name="Lambais M.R."/>
            <person name="Leite L.C.C."/>
            <person name="Lemos E.G.M."/>
            <person name="Lemos M.V.F."/>
            <person name="Lopes S.A."/>
            <person name="Lopes C.R."/>
            <person name="Machado J.A."/>
            <person name="Machado M.A."/>
            <person name="Madeira A.M.B.N."/>
            <person name="Madeira H.M.F."/>
            <person name="Marino C.L."/>
            <person name="Marques M.V."/>
            <person name="Martins E.A.L."/>
            <person name="Martins E.M.F."/>
            <person name="Matsukuma A.Y."/>
            <person name="Menck C.F.M."/>
            <person name="Miracca E.C."/>
            <person name="Miyaki C.Y."/>
            <person name="Monteiro-Vitorello C.B."/>
            <person name="Moon D.H."/>
            <person name="Nagai M.A."/>
            <person name="Nascimento A.L.T.O."/>
            <person name="Netto L.E.S."/>
            <person name="Nhani A. Jr."/>
            <person name="Nobrega F.G."/>
            <person name="Nunes L.R."/>
            <person name="Oliveira M.A."/>
            <person name="de Oliveira M.C."/>
            <person name="de Oliveira R.C."/>
            <person name="Palmieri D.A."/>
            <person name="Paris A."/>
            <person name="Peixoto B.R."/>
            <person name="Pereira G.A.G."/>
            <person name="Pereira H.A. Jr."/>
            <person name="Pesquero J.B."/>
            <person name="Quaggio R.B."/>
            <person name="Roberto P.G."/>
            <person name="Rodrigues V."/>
            <person name="de Rosa A.J.M."/>
            <person name="de Rosa V.E. Jr."/>
            <person name="de Sa R.G."/>
            <person name="Santelli R.V."/>
            <person name="Sawasaki H.E."/>
            <person name="da Silva A.C.R."/>
            <person name="da Silva A.M."/>
            <person name="da Silva F.R."/>
            <person name="Silva W.A. Jr."/>
            <person name="da Silveira J.F."/>
            <person name="Silvestri M.L.Z."/>
            <person name="Siqueira W.J."/>
            <person name="de Souza A.A."/>
            <person name="de Souza A.P."/>
            <person name="Terenzi M.F."/>
            <person name="Truffi D."/>
            <person name="Tsai S.M."/>
            <person name="Tsuhako M.H."/>
            <person name="Vallada H."/>
            <person name="Van Sluys M.A."/>
            <person name="Verjovski-Almeida S."/>
            <person name="Vettore A.L."/>
            <person name="Zago M.A."/>
            <person name="Zatz M."/>
            <person name="Meidanis J."/>
            <person name="Setubal J.C."/>
        </authorList>
    </citation>
    <scope>NUCLEOTIDE SEQUENCE [LARGE SCALE GENOMIC DNA]</scope>
    <source>
        <strain>9a5c</strain>
    </source>
</reference>
<feature type="chain" id="PRO_0000113269" description="N-acetylornithine carbamoyltransferase">
    <location>
        <begin position="1"/>
        <end position="336"/>
    </location>
</feature>
<feature type="binding site" description="in other chain" evidence="1">
    <location>
        <begin position="49"/>
        <end position="52"/>
    </location>
    <ligand>
        <name>carbamoyl phosphate</name>
        <dbReference type="ChEBI" id="CHEBI:58228"/>
        <note>ligand shared between two neighboring subunits</note>
    </ligand>
</feature>
<feature type="binding site" evidence="1">
    <location>
        <position position="77"/>
    </location>
    <ligand>
        <name>carbamoyl phosphate</name>
        <dbReference type="ChEBI" id="CHEBI:58228"/>
        <note>ligand shared between two neighboring subunits</note>
    </ligand>
</feature>
<feature type="binding site" description="in other chain" evidence="1">
    <location>
        <position position="112"/>
    </location>
    <ligand>
        <name>carbamoyl phosphate</name>
        <dbReference type="ChEBI" id="CHEBI:58228"/>
        <note>ligand shared between two neighboring subunits</note>
    </ligand>
</feature>
<feature type="binding site" evidence="1">
    <location>
        <position position="144"/>
    </location>
    <ligand>
        <name>N(2)-acetyl-L-ornithine</name>
        <dbReference type="ChEBI" id="CHEBI:57805"/>
    </ligand>
</feature>
<feature type="binding site" description="in other chain" evidence="1">
    <location>
        <begin position="148"/>
        <end position="151"/>
    </location>
    <ligand>
        <name>carbamoyl phosphate</name>
        <dbReference type="ChEBI" id="CHEBI:58228"/>
        <note>ligand shared between two neighboring subunits</note>
    </ligand>
</feature>
<feature type="binding site" evidence="1">
    <location>
        <position position="252"/>
    </location>
    <ligand>
        <name>N(2)-acetyl-L-ornithine</name>
        <dbReference type="ChEBI" id="CHEBI:57805"/>
    </ligand>
</feature>
<feature type="binding site" description="in other chain" evidence="1">
    <location>
        <begin position="294"/>
        <end position="295"/>
    </location>
    <ligand>
        <name>carbamoyl phosphate</name>
        <dbReference type="ChEBI" id="CHEBI:58228"/>
        <note>ligand shared between two neighboring subunits</note>
    </ligand>
</feature>
<feature type="binding site" evidence="1">
    <location>
        <position position="295"/>
    </location>
    <ligand>
        <name>N(2)-acetyl-L-ornithine</name>
        <dbReference type="ChEBI" id="CHEBI:57805"/>
    </ligand>
</feature>
<feature type="binding site" description="in other chain" evidence="1">
    <location>
        <position position="322"/>
    </location>
    <ligand>
        <name>carbamoyl phosphate</name>
        <dbReference type="ChEBI" id="CHEBI:58228"/>
        <note>ligand shared between two neighboring subunits</note>
    </ligand>
</feature>
<feature type="site" description="Key residue in conferring substrate specificity for N-acetyl-L-ornithine versus N-succinyl-L-ornithine" evidence="1">
    <location>
        <position position="92"/>
    </location>
</feature>
<feature type="modified residue" description="N6-carboxylysine" evidence="1">
    <location>
        <position position="302"/>
    </location>
</feature>
<comment type="function">
    <text evidence="1">Catalyzes the transfer of the carbamoyl group from carbamoyl phosphate to the delta-amino group of N(2)-acetyl-L-ornithine to produce N(2)-acetyl-L-citrulline. This is a step in an alternative arginine biosynthesis pathway. The enzyme has no activity with ornithine.</text>
</comment>
<comment type="catalytic activity">
    <reaction evidence="1">
        <text>N(2)-acetyl-L-ornithine + carbamoyl phosphate = N(2)-acetyl-L-citrulline + phosphate + H(+)</text>
        <dbReference type="Rhea" id="RHEA:18609"/>
        <dbReference type="ChEBI" id="CHEBI:15378"/>
        <dbReference type="ChEBI" id="CHEBI:43474"/>
        <dbReference type="ChEBI" id="CHEBI:57805"/>
        <dbReference type="ChEBI" id="CHEBI:58228"/>
        <dbReference type="ChEBI" id="CHEBI:58765"/>
        <dbReference type="EC" id="2.1.3.9"/>
    </reaction>
    <physiologicalReaction direction="left-to-right" evidence="1">
        <dbReference type="Rhea" id="RHEA:18610"/>
    </physiologicalReaction>
</comment>
<comment type="activity regulation">
    <text evidence="1">Carboxylation at Lys-302 increases the catalytic activity of the enzyme.</text>
</comment>
<comment type="pathway">
    <text evidence="1">Amino-acid biosynthesis; L-arginine biosynthesis.</text>
</comment>
<comment type="subunit">
    <text evidence="1">Homotrimer.</text>
</comment>
<comment type="subcellular location">
    <subcellularLocation>
        <location evidence="3">Cytoplasm</location>
    </subcellularLocation>
</comment>
<comment type="similarity">
    <text evidence="2 3">Belongs to the aspartate/ornithine carbamoyltransferase superfamily. AOTCase family.</text>
</comment>